<organism>
    <name type="scientific">Solanum lycopersicum</name>
    <name type="common">Tomato</name>
    <name type="synonym">Lycopersicon esculentum</name>
    <dbReference type="NCBI Taxonomy" id="4081"/>
    <lineage>
        <taxon>Eukaryota</taxon>
        <taxon>Viridiplantae</taxon>
        <taxon>Streptophyta</taxon>
        <taxon>Embryophyta</taxon>
        <taxon>Tracheophyta</taxon>
        <taxon>Spermatophyta</taxon>
        <taxon>Magnoliopsida</taxon>
        <taxon>eudicotyledons</taxon>
        <taxon>Gunneridae</taxon>
        <taxon>Pentapetalae</taxon>
        <taxon>asterids</taxon>
        <taxon>lamiids</taxon>
        <taxon>Solanales</taxon>
        <taxon>Solanaceae</taxon>
        <taxon>Solanoideae</taxon>
        <taxon>Solaneae</taxon>
        <taxon>Solanum</taxon>
        <taxon>Solanum subgen. Lycopersicon</taxon>
    </lineage>
</organism>
<proteinExistence type="evidence at protein level"/>
<sequence>MGLFNISLLLTCLMVLAIFHSCEAQNSPQDYLAVHNDARAQVGVGPMSWDANLASRAQNYANSRAGDCNLIHSGAGENLAKGGGDFTGRAAVQLWVSERPSYNYATNQCVGGKKCRHYTQVVWRNSVRLGCGRARCNNGWWFISCNYDPVGNWIGQRPY</sequence>
<evidence type="ECO:0000269" key="1">
    <source>
    </source>
</evidence>
<evidence type="ECO:0000305" key="2"/>
<evidence type="ECO:0007829" key="3">
    <source>
        <dbReference type="PDB" id="1CFE"/>
    </source>
</evidence>
<gene>
    <name type="primary">PR1B1</name>
</gene>
<dbReference type="EMBL" id="M69248">
    <property type="protein sequence ID" value="AAA03616.1"/>
    <property type="molecule type" value="mRNA"/>
</dbReference>
<dbReference type="EMBL" id="X68738">
    <property type="protein sequence ID" value="CAA48672.1"/>
    <property type="molecule type" value="mRNA"/>
</dbReference>
<dbReference type="EMBL" id="Y08804">
    <property type="protein sequence ID" value="CAA70042.1"/>
    <property type="molecule type" value="mRNA"/>
</dbReference>
<dbReference type="PIR" id="S26239">
    <property type="entry name" value="VCTO14"/>
</dbReference>
<dbReference type="RefSeq" id="NP_001234314.1">
    <property type="nucleotide sequence ID" value="NM_001247385.2"/>
</dbReference>
<dbReference type="PDB" id="1CFE">
    <property type="method" value="NMR"/>
    <property type="chains" value="A=25-159"/>
</dbReference>
<dbReference type="PDBsum" id="1CFE"/>
<dbReference type="BMRB" id="P04284"/>
<dbReference type="SMR" id="P04284"/>
<dbReference type="FunCoup" id="P04284">
    <property type="interactions" value="533"/>
</dbReference>
<dbReference type="STRING" id="4081.P04284"/>
<dbReference type="PaxDb" id="4081-Solyc00g174340.1.1"/>
<dbReference type="GeneID" id="544123"/>
<dbReference type="KEGG" id="sly:544123"/>
<dbReference type="eggNOG" id="KOG3017">
    <property type="taxonomic scope" value="Eukaryota"/>
</dbReference>
<dbReference type="InParanoid" id="P04284"/>
<dbReference type="OrthoDB" id="337038at2759"/>
<dbReference type="EvolutionaryTrace" id="P04284"/>
<dbReference type="Proteomes" id="UP000004994">
    <property type="component" value="Unplaced"/>
</dbReference>
<dbReference type="ExpressionAtlas" id="P04284">
    <property type="expression patterns" value="baseline and differential"/>
</dbReference>
<dbReference type="GO" id="GO:0005615">
    <property type="term" value="C:extracellular space"/>
    <property type="evidence" value="ECO:0000318"/>
    <property type="project" value="GO_Central"/>
</dbReference>
<dbReference type="GO" id="GO:0050832">
    <property type="term" value="P:defense response to fungus"/>
    <property type="evidence" value="ECO:0007669"/>
    <property type="project" value="UniProtKB-KW"/>
</dbReference>
<dbReference type="GO" id="GO:0031640">
    <property type="term" value="P:killing of cells of another organism"/>
    <property type="evidence" value="ECO:0007669"/>
    <property type="project" value="UniProtKB-KW"/>
</dbReference>
<dbReference type="GO" id="GO:0019953">
    <property type="term" value="P:sexual reproduction"/>
    <property type="evidence" value="ECO:0000318"/>
    <property type="project" value="GO_Central"/>
</dbReference>
<dbReference type="CDD" id="cd05381">
    <property type="entry name" value="CAP_PR-1"/>
    <property type="match status" value="1"/>
</dbReference>
<dbReference type="FunFam" id="3.40.33.10:FF:000006">
    <property type="entry name" value="Putative pathogenesis-related protein 1"/>
    <property type="match status" value="1"/>
</dbReference>
<dbReference type="Gene3D" id="3.40.33.10">
    <property type="entry name" value="CAP"/>
    <property type="match status" value="1"/>
</dbReference>
<dbReference type="InterPro" id="IPR018244">
    <property type="entry name" value="Allrgn_V5/Tpx1_CS"/>
</dbReference>
<dbReference type="InterPro" id="IPR014044">
    <property type="entry name" value="CAP_dom"/>
</dbReference>
<dbReference type="InterPro" id="IPR035940">
    <property type="entry name" value="CAP_sf"/>
</dbReference>
<dbReference type="InterPro" id="IPR001283">
    <property type="entry name" value="CRISP-related"/>
</dbReference>
<dbReference type="PANTHER" id="PTHR10334">
    <property type="entry name" value="CYSTEINE-RICH SECRETORY PROTEIN-RELATED"/>
    <property type="match status" value="1"/>
</dbReference>
<dbReference type="Pfam" id="PF00188">
    <property type="entry name" value="CAP"/>
    <property type="match status" value="1"/>
</dbReference>
<dbReference type="PRINTS" id="PR00837">
    <property type="entry name" value="V5TPXLIKE"/>
</dbReference>
<dbReference type="SMART" id="SM00198">
    <property type="entry name" value="SCP"/>
    <property type="match status" value="1"/>
</dbReference>
<dbReference type="SUPFAM" id="SSF55797">
    <property type="entry name" value="PR-1-like"/>
    <property type="match status" value="1"/>
</dbReference>
<dbReference type="PROSITE" id="PS01009">
    <property type="entry name" value="CRISP_1"/>
    <property type="match status" value="1"/>
</dbReference>
<dbReference type="PROSITE" id="PS01010">
    <property type="entry name" value="CRISP_2"/>
    <property type="match status" value="1"/>
</dbReference>
<feature type="signal peptide" evidence="1">
    <location>
        <begin position="1"/>
        <end position="24"/>
    </location>
</feature>
<feature type="chain" id="PRO_0000006309" description="Pathogenesis-related leaf protein 6">
    <location>
        <begin position="25"/>
        <end position="159"/>
    </location>
</feature>
<feature type="domain" description="SCP">
    <location>
        <begin position="32"/>
        <end position="147"/>
    </location>
</feature>
<feature type="modified residue" description="Pyrrolidone carboxylic acid" evidence="1">
    <location>
        <position position="25"/>
    </location>
</feature>
<feature type="disulfide bond">
    <location>
        <begin position="68"/>
        <end position="136"/>
    </location>
</feature>
<feature type="disulfide bond">
    <location>
        <begin position="109"/>
        <end position="115"/>
    </location>
</feature>
<feature type="disulfide bond">
    <location>
        <begin position="131"/>
        <end position="145"/>
    </location>
</feature>
<feature type="sequence conflict" description="In Ref. 4; AA sequence." evidence="2" ref="4">
    <location>
        <begin position="123"/>
        <end position="127"/>
    </location>
</feature>
<feature type="helix" evidence="3">
    <location>
        <begin position="28"/>
        <end position="41"/>
    </location>
</feature>
<feature type="helix" evidence="3">
    <location>
        <begin position="52"/>
        <end position="64"/>
    </location>
</feature>
<feature type="turn" evidence="3">
    <location>
        <begin position="65"/>
        <end position="67"/>
    </location>
</feature>
<feature type="strand" evidence="3">
    <location>
        <begin position="74"/>
        <end position="77"/>
    </location>
</feature>
<feature type="strand" evidence="3">
    <location>
        <begin position="83"/>
        <end position="85"/>
    </location>
</feature>
<feature type="helix" evidence="3">
    <location>
        <begin position="88"/>
        <end position="96"/>
    </location>
</feature>
<feature type="helix" evidence="3">
    <location>
        <begin position="97"/>
        <end position="101"/>
    </location>
</feature>
<feature type="helix" evidence="3">
    <location>
        <begin position="104"/>
        <end position="106"/>
    </location>
</feature>
<feature type="strand" evidence="3">
    <location>
        <begin position="111"/>
        <end position="113"/>
    </location>
</feature>
<feature type="helix" evidence="3">
    <location>
        <begin position="118"/>
        <end position="122"/>
    </location>
</feature>
<feature type="strand" evidence="3">
    <location>
        <begin position="128"/>
        <end position="135"/>
    </location>
</feature>
<feature type="strand" evidence="3">
    <location>
        <begin position="139"/>
        <end position="146"/>
    </location>
</feature>
<keyword id="KW-0002">3D-structure</keyword>
<keyword id="KW-0929">Antimicrobial</keyword>
<keyword id="KW-0903">Direct protein sequencing</keyword>
<keyword id="KW-1015">Disulfide bond</keyword>
<keyword id="KW-0295">Fungicide</keyword>
<keyword id="KW-0568">Pathogenesis-related protein</keyword>
<keyword id="KW-0611">Plant defense</keyword>
<keyword id="KW-0873">Pyrrolidone carboxylic acid</keyword>
<keyword id="KW-1185">Reference proteome</keyword>
<keyword id="KW-0732">Signal</keyword>
<accession>P04284</accession>
<accession>Q04109</accession>
<reference key="1">
    <citation type="journal article" date="1992" name="Plant Mol. Biol.">
        <title>Differential accumulation of mRNAs encoding extracellular and intracellular PR proteins in tomato induced by virulent and avirulent races of Cladosporium fulvum.</title>
        <authorList>
            <person name="van Kan J.A.L."/>
            <person name="Joosten M.H.A.J."/>
            <person name="Wagemakers C.A.M."/>
            <person name="van den Berg-Velthuis G.C.M."/>
            <person name="de Wit P.J.G.M."/>
        </authorList>
    </citation>
    <scope>NUCLEOTIDE SEQUENCE [MRNA]</scope>
    <scope>PARTIAL PROTEIN SEQUENCE</scope>
    <source>
        <strain>cv. Moneymaker</strain>
        <tissue>Leaf</tissue>
    </source>
</reference>
<reference key="2">
    <citation type="journal article" date="1993" name="Plant Physiol.">
        <title>Nucleotide sequence of a cDNA encoding a pathogenesis-related protein, p1-p14, from tomato (Lycopersicon esculentum).</title>
        <authorList>
            <person name="Tornero P."/>
            <person name="Rodrigo T."/>
            <person name="Conejero V."/>
            <person name="Vera P."/>
        </authorList>
    </citation>
    <scope>NUCLEOTIDE SEQUENCE [MRNA]</scope>
    <source>
        <tissue>Leaf</tissue>
    </source>
</reference>
<reference key="3">
    <citation type="journal article" date="1997" name="Mol. Plant Microbe Interact.">
        <title>Two PR-1 genes from tomato are differentially regulated and reveal a novel mode of expression for a pathogenesis-related gene during the hypersensitive response and development.</title>
        <authorList>
            <person name="Tornero P."/>
            <person name="Gadea J."/>
            <person name="Conejero V."/>
            <person name="Vera P."/>
        </authorList>
    </citation>
    <scope>NUCLEOTIDE SEQUENCE [MRNA]</scope>
    <source>
        <strain>cv. VFN8</strain>
        <tissue>Leaf</tissue>
    </source>
</reference>
<reference key="4">
    <citation type="journal article" date="1985" name="EMBO J.">
        <title>Amino acid sequence of the 'pathogenesis-related' leaf protein p14 from viroid-infected tomato reveals a new type of structurally unfamiliar proteins.</title>
        <authorList>
            <person name="Lucas J."/>
            <person name="Camacho-Henriquez A."/>
            <person name="Lottspeich F."/>
            <person name="Henschen A."/>
            <person name="Sanger H.L."/>
        </authorList>
    </citation>
    <scope>PROTEIN SEQUENCE OF 25-159</scope>
    <scope>PYROGLUTAMATE FORMATION AT GLN-25</scope>
    <source>
        <strain>cv. Rutgers</strain>
    </source>
</reference>
<reference key="5">
    <citation type="journal article" date="1997" name="J. Mol. Biol.">
        <title>NMR solution structure of the pathogenesis-related protein P14a.</title>
        <authorList>
            <person name="Fernandez C."/>
            <person name="Szyperski T."/>
            <person name="Bruyere T."/>
            <person name="Ramage P."/>
            <person name="Moesinger E."/>
            <person name="Wuethrich K."/>
        </authorList>
    </citation>
    <scope>STRUCTURE BY NMR</scope>
</reference>
<name>PR06_SOLLC</name>
<comment type="function">
    <text>Probably involved in the defense reaction of plants against pathogens. Has antifungal activity.</text>
</comment>
<comment type="developmental stage">
    <text>Maximum expression found during days 4 to 8 and days 8 to 12 after inoculation with an avirulent and a virulent pathogen respectively.</text>
</comment>
<comment type="induction">
    <text>Upon infection by virulent and avirulent races of pathogens, for example fungal pathogen C.fulvum. Also induced by ethylene.</text>
</comment>
<comment type="similarity">
    <text evidence="2">Belongs to the CRISP family.</text>
</comment>
<protein>
    <recommendedName>
        <fullName>Pathogenesis-related leaf protein 6</fullName>
        <shortName>P6</shortName>
    </recommendedName>
    <alternativeName>
        <fullName>Ethylene-induced protein P1</fullName>
    </alternativeName>
    <alternativeName>
        <fullName>P14</fullName>
    </alternativeName>
    <alternativeName>
        <fullName>P14A</fullName>
    </alternativeName>
    <alternativeName>
        <fullName>PR protein</fullName>
    </alternativeName>
</protein>